<comment type="function">
    <text evidence="1">Tetrapolymerization of the monopyrrole PBG into the hydroxymethylbilane pre-uroporphyrinogen in several discrete steps.</text>
</comment>
<comment type="catalytic activity">
    <reaction evidence="1">
        <text>4 porphobilinogen + H2O = hydroxymethylbilane + 4 NH4(+)</text>
        <dbReference type="Rhea" id="RHEA:13185"/>
        <dbReference type="ChEBI" id="CHEBI:15377"/>
        <dbReference type="ChEBI" id="CHEBI:28938"/>
        <dbReference type="ChEBI" id="CHEBI:57845"/>
        <dbReference type="ChEBI" id="CHEBI:58126"/>
        <dbReference type="EC" id="2.5.1.61"/>
    </reaction>
</comment>
<comment type="cofactor">
    <cofactor evidence="1">
        <name>dipyrromethane</name>
        <dbReference type="ChEBI" id="CHEBI:60342"/>
    </cofactor>
    <text evidence="1">Binds 1 dipyrromethane group covalently.</text>
</comment>
<comment type="pathway">
    <text evidence="1">Porphyrin-containing compound metabolism; protoporphyrin-IX biosynthesis; coproporphyrinogen-III from 5-aminolevulinate: step 2/4.</text>
</comment>
<comment type="subunit">
    <text evidence="1">Monomer.</text>
</comment>
<comment type="miscellaneous">
    <text evidence="1">The porphobilinogen subunits are added to the dipyrromethane group.</text>
</comment>
<comment type="similarity">
    <text evidence="1">Belongs to the HMBS family.</text>
</comment>
<sequence length="308" mass="32579">MQTTLKIGTRGSPLALAQAHETQARLMAAHGLPAEAFEVVVISTSGDRIQDRPLSEAGGKGLFTKEIEEALLAGAIDIAVHSSKDMPTQLPDGLELSAFLPREDARDAFVGKAAKTIADLLRGAKVGSSSLRRQALIRRMRPDLDVVMFRGNVQTRLRKLDEGVAAGTILAYAGLKRLGLEHVATDLMPLDIFPPAPGQGAIGIETRIGDRAVEKMLVAIHDVPTGQALACERAFLAALDGSCRTPIAGHATIETGNLSFAGLIISPDGTQSHTVELQGPAQDAARIGDEAARTVRAKAGEKFFDGWV</sequence>
<proteinExistence type="inferred from homology"/>
<reference key="1">
    <citation type="journal article" date="2000" name="DNA Res.">
        <title>Complete genome structure of the nitrogen-fixing symbiotic bacterium Mesorhizobium loti.</title>
        <authorList>
            <person name="Kaneko T."/>
            <person name="Nakamura Y."/>
            <person name="Sato S."/>
            <person name="Asamizu E."/>
            <person name="Kato T."/>
            <person name="Sasamoto S."/>
            <person name="Watanabe A."/>
            <person name="Idesawa K."/>
            <person name="Ishikawa A."/>
            <person name="Kawashima K."/>
            <person name="Kimura T."/>
            <person name="Kishida Y."/>
            <person name="Kiyokawa C."/>
            <person name="Kohara M."/>
            <person name="Matsumoto M."/>
            <person name="Matsuno A."/>
            <person name="Mochizuki Y."/>
            <person name="Nakayama S."/>
            <person name="Nakazaki N."/>
            <person name="Shimpo S."/>
            <person name="Sugimoto M."/>
            <person name="Takeuchi C."/>
            <person name="Yamada M."/>
            <person name="Tabata S."/>
        </authorList>
    </citation>
    <scope>NUCLEOTIDE SEQUENCE [LARGE SCALE GENOMIC DNA]</scope>
    <source>
        <strain>LMG 29417 / CECT 9101 / MAFF 303099</strain>
    </source>
</reference>
<feature type="chain" id="PRO_0000142978" description="Porphobilinogen deaminase">
    <location>
        <begin position="1"/>
        <end position="308"/>
    </location>
</feature>
<feature type="modified residue" description="S-(dipyrrolylmethanemethyl)cysteine" evidence="1">
    <location>
        <position position="243"/>
    </location>
</feature>
<name>HEM3_RHILO</name>
<keyword id="KW-0627">Porphyrin biosynthesis</keyword>
<keyword id="KW-0808">Transferase</keyword>
<accession>Q98EI7</accession>
<organism>
    <name type="scientific">Mesorhizobium japonicum (strain LMG 29417 / CECT 9101 / MAFF 303099)</name>
    <name type="common">Mesorhizobium loti (strain MAFF 303099)</name>
    <dbReference type="NCBI Taxonomy" id="266835"/>
    <lineage>
        <taxon>Bacteria</taxon>
        <taxon>Pseudomonadati</taxon>
        <taxon>Pseudomonadota</taxon>
        <taxon>Alphaproteobacteria</taxon>
        <taxon>Hyphomicrobiales</taxon>
        <taxon>Phyllobacteriaceae</taxon>
        <taxon>Mesorhizobium</taxon>
    </lineage>
</organism>
<gene>
    <name evidence="1" type="primary">hemC</name>
    <name type="ordered locus">mll4223</name>
</gene>
<evidence type="ECO:0000255" key="1">
    <source>
        <dbReference type="HAMAP-Rule" id="MF_00260"/>
    </source>
</evidence>
<protein>
    <recommendedName>
        <fullName evidence="1">Porphobilinogen deaminase</fullName>
        <shortName evidence="1">PBG</shortName>
        <ecNumber evidence="1">2.5.1.61</ecNumber>
    </recommendedName>
    <alternativeName>
        <fullName evidence="1">Hydroxymethylbilane synthase</fullName>
        <shortName evidence="1">HMBS</shortName>
    </alternativeName>
    <alternativeName>
        <fullName evidence="1">Pre-uroporphyrinogen synthase</fullName>
    </alternativeName>
</protein>
<dbReference type="EC" id="2.5.1.61" evidence="1"/>
<dbReference type="EMBL" id="BA000012">
    <property type="protein sequence ID" value="BAB50931.1"/>
    <property type="molecule type" value="Genomic_DNA"/>
</dbReference>
<dbReference type="RefSeq" id="WP_010912273.1">
    <property type="nucleotide sequence ID" value="NC_002678.2"/>
</dbReference>
<dbReference type="SMR" id="Q98EI7"/>
<dbReference type="KEGG" id="mlo:mll4223"/>
<dbReference type="PATRIC" id="fig|266835.9.peg.3334"/>
<dbReference type="eggNOG" id="COG0181">
    <property type="taxonomic scope" value="Bacteria"/>
</dbReference>
<dbReference type="HOGENOM" id="CLU_019704_1_2_5"/>
<dbReference type="UniPathway" id="UPA00251">
    <property type="reaction ID" value="UER00319"/>
</dbReference>
<dbReference type="Proteomes" id="UP000000552">
    <property type="component" value="Chromosome"/>
</dbReference>
<dbReference type="GO" id="GO:0005737">
    <property type="term" value="C:cytoplasm"/>
    <property type="evidence" value="ECO:0007669"/>
    <property type="project" value="TreeGrafter"/>
</dbReference>
<dbReference type="GO" id="GO:0004418">
    <property type="term" value="F:hydroxymethylbilane synthase activity"/>
    <property type="evidence" value="ECO:0007669"/>
    <property type="project" value="UniProtKB-UniRule"/>
</dbReference>
<dbReference type="GO" id="GO:0006782">
    <property type="term" value="P:protoporphyrinogen IX biosynthetic process"/>
    <property type="evidence" value="ECO:0007669"/>
    <property type="project" value="UniProtKB-UniRule"/>
</dbReference>
<dbReference type="FunFam" id="3.40.190.10:FF:000004">
    <property type="entry name" value="Porphobilinogen deaminase"/>
    <property type="match status" value="1"/>
</dbReference>
<dbReference type="FunFam" id="3.40.190.10:FF:000005">
    <property type="entry name" value="Porphobilinogen deaminase"/>
    <property type="match status" value="1"/>
</dbReference>
<dbReference type="Gene3D" id="3.40.190.10">
    <property type="entry name" value="Periplasmic binding protein-like II"/>
    <property type="match status" value="2"/>
</dbReference>
<dbReference type="Gene3D" id="3.30.160.40">
    <property type="entry name" value="Porphobilinogen deaminase, C-terminal domain"/>
    <property type="match status" value="1"/>
</dbReference>
<dbReference type="HAMAP" id="MF_00260">
    <property type="entry name" value="Porphobil_deam"/>
    <property type="match status" value="1"/>
</dbReference>
<dbReference type="InterPro" id="IPR000860">
    <property type="entry name" value="HemC"/>
</dbReference>
<dbReference type="InterPro" id="IPR022419">
    <property type="entry name" value="Porphobilin_deaminase_cofac_BS"/>
</dbReference>
<dbReference type="InterPro" id="IPR022417">
    <property type="entry name" value="Porphobilin_deaminase_N"/>
</dbReference>
<dbReference type="InterPro" id="IPR022418">
    <property type="entry name" value="Porphobilinogen_deaminase_C"/>
</dbReference>
<dbReference type="InterPro" id="IPR036803">
    <property type="entry name" value="Porphobilinogen_deaminase_C_sf"/>
</dbReference>
<dbReference type="NCBIfam" id="TIGR00212">
    <property type="entry name" value="hemC"/>
    <property type="match status" value="1"/>
</dbReference>
<dbReference type="PANTHER" id="PTHR11557">
    <property type="entry name" value="PORPHOBILINOGEN DEAMINASE"/>
    <property type="match status" value="1"/>
</dbReference>
<dbReference type="PANTHER" id="PTHR11557:SF0">
    <property type="entry name" value="PORPHOBILINOGEN DEAMINASE"/>
    <property type="match status" value="1"/>
</dbReference>
<dbReference type="Pfam" id="PF01379">
    <property type="entry name" value="Porphobil_deam"/>
    <property type="match status" value="1"/>
</dbReference>
<dbReference type="Pfam" id="PF03900">
    <property type="entry name" value="Porphobil_deamC"/>
    <property type="match status" value="1"/>
</dbReference>
<dbReference type="PIRSF" id="PIRSF001438">
    <property type="entry name" value="4pyrrol_synth_OHMeBilane_synth"/>
    <property type="match status" value="1"/>
</dbReference>
<dbReference type="PRINTS" id="PR00151">
    <property type="entry name" value="PORPHBDMNASE"/>
</dbReference>
<dbReference type="SUPFAM" id="SSF53850">
    <property type="entry name" value="Periplasmic binding protein-like II"/>
    <property type="match status" value="1"/>
</dbReference>
<dbReference type="SUPFAM" id="SSF54782">
    <property type="entry name" value="Porphobilinogen deaminase (hydroxymethylbilane synthase), C-terminal domain"/>
    <property type="match status" value="1"/>
</dbReference>
<dbReference type="PROSITE" id="PS00533">
    <property type="entry name" value="PORPHOBILINOGEN_DEAM"/>
    <property type="match status" value="1"/>
</dbReference>